<name>PSBD_BPSYW</name>
<organismHost>
    <name type="scientific">Synechococcus</name>
    <dbReference type="NCBI Taxonomy" id="1129"/>
</organismHost>
<feature type="chain" id="PRO_0000359712" description="Photosystem II D2 protein">
    <location>
        <begin position="1"/>
        <end position="351"/>
    </location>
</feature>
<feature type="transmembrane region" description="Helical" evidence="1">
    <location>
        <begin position="39"/>
        <end position="59"/>
    </location>
</feature>
<feature type="transmembrane region" description="Helical" evidence="1">
    <location>
        <begin position="123"/>
        <end position="139"/>
    </location>
</feature>
<feature type="transmembrane region" description="Helical" evidence="1">
    <location>
        <begin position="151"/>
        <end position="164"/>
    </location>
</feature>
<feature type="transmembrane region" description="Helical" evidence="1">
    <location>
        <begin position="206"/>
        <end position="226"/>
    </location>
</feature>
<feature type="transmembrane region" description="Helical" evidence="1">
    <location>
        <begin position="277"/>
        <end position="293"/>
    </location>
</feature>
<feature type="binding site" description="axial binding residue" evidence="1">
    <location>
        <position position="116"/>
    </location>
    <ligand>
        <name>chlorophyll a</name>
        <dbReference type="ChEBI" id="CHEBI:58416"/>
        <label>ChlzD2</label>
    </ligand>
    <ligandPart>
        <name>Mg</name>
        <dbReference type="ChEBI" id="CHEBI:25107"/>
    </ligandPart>
</feature>
<feature type="binding site" evidence="1">
    <location>
        <position position="128"/>
    </location>
    <ligand>
        <name>pheophytin a</name>
        <dbReference type="ChEBI" id="CHEBI:136840"/>
        <label>D2</label>
    </ligand>
</feature>
<feature type="binding site" evidence="1">
    <location>
        <position position="141"/>
    </location>
    <ligand>
        <name>pheophytin a</name>
        <dbReference type="ChEBI" id="CHEBI:136840"/>
        <label>D2</label>
    </ligand>
</feature>
<feature type="binding site" description="axial binding residue" evidence="1">
    <location>
        <position position="196"/>
    </location>
    <ligand>
        <name>chlorophyll a</name>
        <dbReference type="ChEBI" id="CHEBI:58416"/>
        <label>PD2</label>
    </ligand>
    <ligandPart>
        <name>Mg</name>
        <dbReference type="ChEBI" id="CHEBI:25107"/>
    </ligandPart>
</feature>
<feature type="binding site" evidence="1">
    <location>
        <position position="213"/>
    </location>
    <ligand>
        <name>a plastoquinone</name>
        <dbReference type="ChEBI" id="CHEBI:17757"/>
        <label>Q(A)</label>
    </ligand>
</feature>
<feature type="binding site" evidence="1">
    <location>
        <position position="213"/>
    </location>
    <ligand>
        <name>Fe cation</name>
        <dbReference type="ChEBI" id="CHEBI:24875"/>
        <note>ligand shared with heterodimeric partner</note>
    </ligand>
</feature>
<feature type="binding site" evidence="1">
    <location>
        <position position="260"/>
    </location>
    <ligand>
        <name>a plastoquinone</name>
        <dbReference type="ChEBI" id="CHEBI:17757"/>
        <label>Q(A)</label>
    </ligand>
</feature>
<feature type="binding site" evidence="1">
    <location>
        <position position="267"/>
    </location>
    <ligand>
        <name>Fe cation</name>
        <dbReference type="ChEBI" id="CHEBI:24875"/>
        <note>ligand shared with heterodimeric partner</note>
    </ligand>
</feature>
<organism>
    <name type="scientific">Synechococcus phage S-WHM1</name>
    <dbReference type="NCBI Taxonomy" id="65015"/>
    <lineage>
        <taxon>Viruses</taxon>
        <taxon>Duplodnaviria</taxon>
        <taxon>Heunggongvirae</taxon>
        <taxon>Uroviricota</taxon>
        <taxon>Caudoviricetes</taxon>
    </lineage>
</organism>
<evidence type="ECO:0000250" key="1">
    <source>
        <dbReference type="UniProtKB" id="D0VWR8"/>
    </source>
</evidence>
<evidence type="ECO:0000305" key="2"/>
<accession>Q6H952</accession>
<protein>
    <recommendedName>
        <fullName>Photosystem II D2 protein</fullName>
        <shortName>PSII D2 protein</shortName>
        <ecNumber>1.10.3.9</ecNumber>
    </recommendedName>
    <alternativeName>
        <fullName>Photosystem Q(A) protein</fullName>
    </alternativeName>
</protein>
<comment type="function">
    <text evidence="1">Photosystem II (PSII) is a light-driven water:plastoquinone oxidoreductase that uses light energy to abstract electrons from H(2)O, generating O(2) and a proton gradient subsequently used for ATP formation. It consists of a core antenna complex that captures photons, and an electron transfer chain that converts photonic excitation into a charge separation. The D1/D2 (PsbA/PsbD) reaction center heterodimer binds P680, the primary electron donor of PSII as well as several subsequent electron acceptors. D2 is needed for assembly of a stable PSII complex.</text>
</comment>
<comment type="catalytic activity">
    <reaction evidence="1">
        <text>2 a plastoquinone + 4 hnu + 2 H2O = 2 a plastoquinol + O2</text>
        <dbReference type="Rhea" id="RHEA:36359"/>
        <dbReference type="Rhea" id="RHEA-COMP:9561"/>
        <dbReference type="Rhea" id="RHEA-COMP:9562"/>
        <dbReference type="ChEBI" id="CHEBI:15377"/>
        <dbReference type="ChEBI" id="CHEBI:15379"/>
        <dbReference type="ChEBI" id="CHEBI:17757"/>
        <dbReference type="ChEBI" id="CHEBI:30212"/>
        <dbReference type="ChEBI" id="CHEBI:62192"/>
        <dbReference type="EC" id="1.10.3.9"/>
    </reaction>
</comment>
<comment type="cofactor">
    <text evidence="1">The D1/D2 heterodimer binds P680, chlorophylls that are the primary electron donor of PSII, and subsequent electron acceptors. It shares a non-heme iron and each subunit binds pheophytin, quinone, additional chlorophylls, carotenoids and lipids. There is also a Cl(-1) ion associated with D1 and D2, which is required for oxygen evolution. The PSII complex binds additional chlorophylls, carotenoids and specific lipids.</text>
</comment>
<comment type="subunit">
    <text evidence="1">PSII is composed of 1 copy each of membrane proteins PsbA, PsbB, PsbC, PsbD, PsbE, PsbF, PsbH, PsbI, PsbJ, PsbK, PsbL, PsbM, PsbT, PsbX, PsbY, PsbZ, Psb30/Ycf12, peripheral proteins PsbO, CyanoQ (PsbQ), PsbU, PsbV and a large number of cofactors. It forms dimeric complexes.</text>
</comment>
<comment type="subcellular location">
    <subcellularLocation>
        <location evidence="2">Host cellular thylakoid membrane</location>
        <topology evidence="2">Multi-pass membrane protein</topology>
    </subcellularLocation>
</comment>
<comment type="similarity">
    <text evidence="1">Belongs to the reaction center PufL/M/PsbA/D family.</text>
</comment>
<reference key="1">
    <citation type="journal article" date="2004" name="Proc. Natl. Acad. Sci. U.S.A.">
        <title>Genetic organization of the psbAD region in phages infecting marine Synechococcus strains.</title>
        <authorList>
            <person name="Millard A."/>
            <person name="Clokie M.R."/>
            <person name="Shub D.A."/>
            <person name="Mann N.H."/>
        </authorList>
    </citation>
    <scope>NUCLEOTIDE SEQUENCE [GENOMIC DNA]</scope>
</reference>
<gene>
    <name type="primary">psbD</name>
</gene>
<keyword id="KW-0148">Chlorophyll</keyword>
<keyword id="KW-0157">Chromophore</keyword>
<keyword id="KW-0249">Electron transport</keyword>
<keyword id="KW-1043">Host membrane</keyword>
<keyword id="KW-1050">Host thylakoid</keyword>
<keyword id="KW-0408">Iron</keyword>
<keyword id="KW-0460">Magnesium</keyword>
<keyword id="KW-0472">Membrane</keyword>
<keyword id="KW-0479">Metal-binding</keyword>
<keyword id="KW-0560">Oxidoreductase</keyword>
<keyword id="KW-0602">Photosynthesis</keyword>
<keyword id="KW-0604">Photosystem II</keyword>
<keyword id="KW-0812">Transmembrane</keyword>
<keyword id="KW-1133">Transmembrane helix</keyword>
<keyword id="KW-0813">Transport</keyword>
<proteinExistence type="inferred from homology"/>
<dbReference type="EC" id="1.10.3.9"/>
<dbReference type="EMBL" id="AJ628769">
    <property type="protein sequence ID" value="CAF32260.1"/>
    <property type="molecule type" value="Genomic_DNA"/>
</dbReference>
<dbReference type="SMR" id="Q6H952"/>
<dbReference type="GO" id="GO:0044160">
    <property type="term" value="C:host thylakoid membrane"/>
    <property type="evidence" value="ECO:0007669"/>
    <property type="project" value="UniProtKB-SubCell"/>
</dbReference>
<dbReference type="GO" id="GO:0016020">
    <property type="term" value="C:membrane"/>
    <property type="evidence" value="ECO:0007669"/>
    <property type="project" value="UniProtKB-KW"/>
</dbReference>
<dbReference type="GO" id="GO:0016168">
    <property type="term" value="F:chlorophyll binding"/>
    <property type="evidence" value="ECO:0007669"/>
    <property type="project" value="UniProtKB-KW"/>
</dbReference>
<dbReference type="GO" id="GO:0045156">
    <property type="term" value="F:electron transporter, transferring electrons within the cyclic electron transport pathway of photosynthesis activity"/>
    <property type="evidence" value="ECO:0007669"/>
    <property type="project" value="InterPro"/>
</dbReference>
<dbReference type="GO" id="GO:0046872">
    <property type="term" value="F:metal ion binding"/>
    <property type="evidence" value="ECO:0007669"/>
    <property type="project" value="UniProtKB-KW"/>
</dbReference>
<dbReference type="GO" id="GO:0016491">
    <property type="term" value="F:oxidoreductase activity"/>
    <property type="evidence" value="ECO:0007669"/>
    <property type="project" value="UniProtKB-KW"/>
</dbReference>
<dbReference type="GO" id="GO:0009772">
    <property type="term" value="P:photosynthetic electron transport in photosystem II"/>
    <property type="evidence" value="ECO:0007669"/>
    <property type="project" value="InterPro"/>
</dbReference>
<dbReference type="FunFam" id="1.20.85.10:FF:000001">
    <property type="entry name" value="photosystem II D2 protein-like"/>
    <property type="match status" value="1"/>
</dbReference>
<dbReference type="Gene3D" id="1.20.85.10">
    <property type="entry name" value="Photosystem II protein D1-like"/>
    <property type="match status" value="1"/>
</dbReference>
<dbReference type="HAMAP" id="MF_01383">
    <property type="entry name" value="PSII_PsbD_D2"/>
    <property type="match status" value="1"/>
</dbReference>
<dbReference type="InterPro" id="IPR055266">
    <property type="entry name" value="D1/D2"/>
</dbReference>
<dbReference type="InterPro" id="IPR036854">
    <property type="entry name" value="Photo_II_D1/D2_sf"/>
</dbReference>
<dbReference type="InterPro" id="IPR000484">
    <property type="entry name" value="Photo_RC_L/M"/>
</dbReference>
<dbReference type="InterPro" id="IPR005868">
    <property type="entry name" value="PSII_PsbD/D2"/>
</dbReference>
<dbReference type="NCBIfam" id="TIGR01152">
    <property type="entry name" value="psbD"/>
    <property type="match status" value="1"/>
</dbReference>
<dbReference type="PANTHER" id="PTHR33149:SF12">
    <property type="entry name" value="PHOTOSYSTEM II D2 PROTEIN"/>
    <property type="match status" value="1"/>
</dbReference>
<dbReference type="PANTHER" id="PTHR33149">
    <property type="entry name" value="PHOTOSYSTEM II PROTEIN D1"/>
    <property type="match status" value="1"/>
</dbReference>
<dbReference type="Pfam" id="PF00124">
    <property type="entry name" value="Photo_RC"/>
    <property type="match status" value="1"/>
</dbReference>
<dbReference type="PRINTS" id="PR00256">
    <property type="entry name" value="REACTNCENTRE"/>
</dbReference>
<dbReference type="SUPFAM" id="SSF81483">
    <property type="entry name" value="Bacterial photosystem II reaction centre, L and M subunits"/>
    <property type="match status" value="1"/>
</dbReference>
<sequence>MVASTLSPPTRGWFDVLDDWLKRDRFVFVGWSGLLLFPTAYLAIGGWLTGTTFVTSWYTHGLASSYLEGANFLTAAVSTPADSMGHSLLLLWGPESQGDFVRWLQLGGLWAFVALHGAFALIGFMLRQFELARLIGIRPYNAIAFSGPIAVFVSVFLLYPLGQSSWFFAPSFGVAAIFRFLLFLQGFHNWTLNPFHMMGVAGILGGALLSAIHGVTVENTLYEDGEQANTFKAFDSTQEEETYSMVTANRFWSQIFGIAFSNKRWLHFFMLFVPVMGLWTSSIGIIGLALNLRAYDFVSQEIRAAEDPEFETFYTKNILLNEGLRAWLAPIDQPHENFVFPEEVLPRGNAL</sequence>